<comment type="function">
    <text evidence="1">Component of the anaphase promoting complex/cyclosome (APC/C), a cell cycle-regulated E3 ubiquitin-protein ligase complex that controls progression through mitosis and the G1 phase of the cell cycle.</text>
</comment>
<comment type="pathway">
    <text>Protein modification; protein ubiquitination.</text>
</comment>
<comment type="subunit">
    <text evidence="1">The APC/C is composed of at least 13 subunits that stay tightly associated throughout the cell cycle: anapc1, anapc2, anapc3, anapc4, anapc5, anapc6, anapc7, anapc8, anapc10, anapc11, cdc20, cdc26 and cdh1.</text>
</comment>
<comment type="subcellular location">
    <subcellularLocation>
        <location evidence="1">Nucleus</location>
    </subcellularLocation>
</comment>
<comment type="similarity">
    <text evidence="3">Belongs to the APC6/CDC16 family.</text>
</comment>
<evidence type="ECO:0000250" key="1"/>
<evidence type="ECO:0000256" key="2">
    <source>
        <dbReference type="SAM" id="MobiDB-lite"/>
    </source>
</evidence>
<evidence type="ECO:0000305" key="3"/>
<feature type="chain" id="PRO_0000328531" description="Anaphase-promoting complex subunit 6">
    <location>
        <begin position="1"/>
        <end position="865"/>
    </location>
</feature>
<feature type="repeat" description="TPR 1">
    <location>
        <begin position="11"/>
        <end position="42"/>
    </location>
</feature>
<feature type="repeat" description="TPR 2">
    <location>
        <begin position="46"/>
        <end position="75"/>
    </location>
</feature>
<feature type="repeat" description="TPR 3">
    <location>
        <begin position="88"/>
        <end position="149"/>
    </location>
</feature>
<feature type="repeat" description="TPR 4">
    <location>
        <begin position="300"/>
        <end position="331"/>
    </location>
</feature>
<feature type="repeat" description="TPR 5">
    <location>
        <begin position="336"/>
        <end position="359"/>
    </location>
</feature>
<feature type="repeat" description="TPR 6">
    <location>
        <begin position="366"/>
        <end position="438"/>
    </location>
</feature>
<feature type="repeat" description="TPR 7">
    <location>
        <begin position="478"/>
        <end position="506"/>
    </location>
</feature>
<feature type="repeat" description="TPR 8">
    <location>
        <begin position="515"/>
        <end position="542"/>
    </location>
</feature>
<feature type="repeat" description="TPR 9">
    <location>
        <begin position="573"/>
        <end position="602"/>
    </location>
</feature>
<feature type="repeat" description="TPR 10">
    <location>
        <begin position="607"/>
        <end position="635"/>
    </location>
</feature>
<feature type="repeat" description="TPR 11">
    <location>
        <begin position="642"/>
        <end position="670"/>
    </location>
</feature>
<feature type="repeat" description="TPR 12">
    <location>
        <begin position="675"/>
        <end position="709"/>
    </location>
</feature>
<feature type="repeat" description="TPR 13">
    <location>
        <begin position="777"/>
        <end position="809"/>
    </location>
</feature>
<feature type="repeat" description="TPR 14">
    <location>
        <begin position="814"/>
        <end position="843"/>
    </location>
</feature>
<feature type="region of interest" description="Disordered" evidence="2">
    <location>
        <begin position="153"/>
        <end position="293"/>
    </location>
</feature>
<feature type="region of interest" description="Disordered" evidence="2">
    <location>
        <begin position="403"/>
        <end position="436"/>
    </location>
</feature>
<feature type="region of interest" description="Disordered" evidence="2">
    <location>
        <begin position="738"/>
        <end position="767"/>
    </location>
</feature>
<feature type="compositionally biased region" description="Acidic residues" evidence="2">
    <location>
        <begin position="183"/>
        <end position="202"/>
    </location>
</feature>
<feature type="compositionally biased region" description="Low complexity" evidence="2">
    <location>
        <begin position="249"/>
        <end position="292"/>
    </location>
</feature>
<feature type="compositionally biased region" description="Low complexity" evidence="2">
    <location>
        <begin position="403"/>
        <end position="434"/>
    </location>
</feature>
<name>CDC16_DICDI</name>
<keyword id="KW-0131">Cell cycle</keyword>
<keyword id="KW-0132">Cell division</keyword>
<keyword id="KW-0498">Mitosis</keyword>
<keyword id="KW-0539">Nucleus</keyword>
<keyword id="KW-1185">Reference proteome</keyword>
<keyword id="KW-0677">Repeat</keyword>
<keyword id="KW-0802">TPR repeat</keyword>
<keyword id="KW-0833">Ubl conjugation pathway</keyword>
<organism>
    <name type="scientific">Dictyostelium discoideum</name>
    <name type="common">Social amoeba</name>
    <dbReference type="NCBI Taxonomy" id="44689"/>
    <lineage>
        <taxon>Eukaryota</taxon>
        <taxon>Amoebozoa</taxon>
        <taxon>Evosea</taxon>
        <taxon>Eumycetozoa</taxon>
        <taxon>Dictyostelia</taxon>
        <taxon>Dictyosteliales</taxon>
        <taxon>Dictyosteliaceae</taxon>
        <taxon>Dictyostelium</taxon>
    </lineage>
</organism>
<accession>Q1ZXE6</accession>
<dbReference type="EMBL" id="AAFI02000085">
    <property type="protein sequence ID" value="EAS66852.1"/>
    <property type="molecule type" value="Genomic_DNA"/>
</dbReference>
<dbReference type="RefSeq" id="XP_001134535.1">
    <property type="nucleotide sequence ID" value="XM_001134535.1"/>
</dbReference>
<dbReference type="SMR" id="Q1ZXE6"/>
<dbReference type="FunCoup" id="Q1ZXE6">
    <property type="interactions" value="538"/>
</dbReference>
<dbReference type="STRING" id="44689.Q1ZXE6"/>
<dbReference type="PaxDb" id="44689-DDB0232238"/>
<dbReference type="EnsemblProtists" id="EAS66852">
    <property type="protein sequence ID" value="EAS66852"/>
    <property type="gene ID" value="DDB_G0286233"/>
</dbReference>
<dbReference type="GeneID" id="8625512"/>
<dbReference type="KEGG" id="ddi:DDB_G0286233"/>
<dbReference type="dictyBase" id="DDB_G0286233">
    <property type="gene designation" value="anapc6"/>
</dbReference>
<dbReference type="VEuPathDB" id="AmoebaDB:DDB_G0286233"/>
<dbReference type="eggNOG" id="KOG1173">
    <property type="taxonomic scope" value="Eukaryota"/>
</dbReference>
<dbReference type="HOGENOM" id="CLU_011751_3_1_1"/>
<dbReference type="InParanoid" id="Q1ZXE6"/>
<dbReference type="PhylomeDB" id="Q1ZXE6"/>
<dbReference type="Reactome" id="R-DDI-141430">
    <property type="pathway name" value="Inactivation of APC/C via direct inhibition of the APC/C complex"/>
</dbReference>
<dbReference type="Reactome" id="R-DDI-174048">
    <property type="pathway name" value="APC/C:Cdc20 mediated degradation of Cyclin B"/>
</dbReference>
<dbReference type="Reactome" id="R-DDI-174084">
    <property type="pathway name" value="Autodegradation of Cdh1 by Cdh1:APC/C"/>
</dbReference>
<dbReference type="Reactome" id="R-DDI-174154">
    <property type="pathway name" value="APC/C:Cdc20 mediated degradation of Securin"/>
</dbReference>
<dbReference type="Reactome" id="R-DDI-174178">
    <property type="pathway name" value="APC/C:Cdh1 mediated degradation of Cdc20 and other APC/C:Cdh1 targeted proteins in late mitosis/early G1"/>
</dbReference>
<dbReference type="Reactome" id="R-DDI-174184">
    <property type="pathway name" value="Cdc20:Phospho-APC/C mediated degradation of Cyclin A"/>
</dbReference>
<dbReference type="Reactome" id="R-DDI-176407">
    <property type="pathway name" value="Conversion from APC/C:Cdc20 to APC/C:Cdh1 in late anaphase"/>
</dbReference>
<dbReference type="Reactome" id="R-DDI-176408">
    <property type="pathway name" value="Regulation of APC/C activators between G1/S and early anaphase"/>
</dbReference>
<dbReference type="Reactome" id="R-DDI-176409">
    <property type="pathway name" value="APC/C:Cdc20 mediated degradation of mitotic proteins"/>
</dbReference>
<dbReference type="Reactome" id="R-DDI-176412">
    <property type="pathway name" value="Phosphorylation of the APC/C"/>
</dbReference>
<dbReference type="Reactome" id="R-DDI-179409">
    <property type="pathway name" value="APC-Cdc20 mediated degradation of Nek2A"/>
</dbReference>
<dbReference type="Reactome" id="R-DDI-2467813">
    <property type="pathway name" value="Separation of Sister Chromatids"/>
</dbReference>
<dbReference type="Reactome" id="R-DDI-2559582">
    <property type="pathway name" value="Senescence-Associated Secretory Phenotype (SASP)"/>
</dbReference>
<dbReference type="Reactome" id="R-DDI-69017">
    <property type="pathway name" value="CDK-mediated phosphorylation and removal of Cdc6"/>
</dbReference>
<dbReference type="Reactome" id="R-DDI-983168">
    <property type="pathway name" value="Antigen processing: Ubiquitination &amp; Proteasome degradation"/>
</dbReference>
<dbReference type="UniPathway" id="UPA00143"/>
<dbReference type="PRO" id="PR:Q1ZXE6"/>
<dbReference type="Proteomes" id="UP000002195">
    <property type="component" value="Chromosome 4"/>
</dbReference>
<dbReference type="GO" id="GO:0005680">
    <property type="term" value="C:anaphase-promoting complex"/>
    <property type="evidence" value="ECO:0000250"/>
    <property type="project" value="dictyBase"/>
</dbReference>
<dbReference type="GO" id="GO:0005737">
    <property type="term" value="C:cytoplasm"/>
    <property type="evidence" value="ECO:0000318"/>
    <property type="project" value="GO_Central"/>
</dbReference>
<dbReference type="GO" id="GO:0004842">
    <property type="term" value="F:ubiquitin-protein transferase activity"/>
    <property type="evidence" value="ECO:0000250"/>
    <property type="project" value="dictyBase"/>
</dbReference>
<dbReference type="GO" id="GO:0031145">
    <property type="term" value="P:anaphase-promoting complex-dependent catabolic process"/>
    <property type="evidence" value="ECO:0000318"/>
    <property type="project" value="GO_Central"/>
</dbReference>
<dbReference type="GO" id="GO:0051301">
    <property type="term" value="P:cell division"/>
    <property type="evidence" value="ECO:0000318"/>
    <property type="project" value="GO_Central"/>
</dbReference>
<dbReference type="GO" id="GO:0045842">
    <property type="term" value="P:positive regulation of mitotic metaphase/anaphase transition"/>
    <property type="evidence" value="ECO:0000318"/>
    <property type="project" value="GO_Central"/>
</dbReference>
<dbReference type="GO" id="GO:0016567">
    <property type="term" value="P:protein ubiquitination"/>
    <property type="evidence" value="ECO:0000318"/>
    <property type="project" value="GO_Central"/>
</dbReference>
<dbReference type="Gene3D" id="1.25.40.10">
    <property type="entry name" value="Tetratricopeptide repeat domain"/>
    <property type="match status" value="4"/>
</dbReference>
<dbReference type="InterPro" id="IPR011990">
    <property type="entry name" value="TPR-like_helical_dom_sf"/>
</dbReference>
<dbReference type="InterPro" id="IPR019734">
    <property type="entry name" value="TPR_rpt"/>
</dbReference>
<dbReference type="PANTHER" id="PTHR12558">
    <property type="entry name" value="CELL DIVISION CYCLE 16,23,27"/>
    <property type="match status" value="1"/>
</dbReference>
<dbReference type="PANTHER" id="PTHR12558:SF9">
    <property type="entry name" value="CELL DIVISION CYCLE PROTEIN 16 HOMOLOG"/>
    <property type="match status" value="1"/>
</dbReference>
<dbReference type="Pfam" id="PF13374">
    <property type="entry name" value="TPR_10"/>
    <property type="match status" value="1"/>
</dbReference>
<dbReference type="Pfam" id="PF13424">
    <property type="entry name" value="TPR_12"/>
    <property type="match status" value="1"/>
</dbReference>
<dbReference type="Pfam" id="PF13181">
    <property type="entry name" value="TPR_8"/>
    <property type="match status" value="1"/>
</dbReference>
<dbReference type="SMART" id="SM00028">
    <property type="entry name" value="TPR"/>
    <property type="match status" value="7"/>
</dbReference>
<dbReference type="SUPFAM" id="SSF48452">
    <property type="entry name" value="TPR-like"/>
    <property type="match status" value="2"/>
</dbReference>
<dbReference type="PROSITE" id="PS50005">
    <property type="entry name" value="TPR"/>
    <property type="match status" value="5"/>
</dbReference>
<dbReference type="PROSITE" id="PS50293">
    <property type="entry name" value="TPR_REGION"/>
    <property type="match status" value="2"/>
</dbReference>
<proteinExistence type="inferred from homology"/>
<sequence length="865" mass="99379">MADNLYDSSIIEKQLKEKIENALSIHSYPTAIFFSDKLLNLVTIHSKEYVKILYILCDALYLDRQFQRSSYLIQKYLNAIEEIDKKGEDYQYIDDIHSHHHNQQQNIFYKRIKKEKEDEQYTNTILKLKYLAAKCKIETNEFDQCLQILNKDNDSSENMDDENNNINNNNNKIKKENEINNDNCDDDDDDDDDDDDDDDDEKDSNQLLKFYTNSKSNKSKDISENNSNNENTTKESINKNNTDSSSIDNKNNNKNNNNNNNNNNNNNNNNNNNNNNNNNNNNNNNNNNNNNNFNKETLIIRSSISCLKGKCYESMDNLKKAKFWYIKALLTDYNCFEAFESLTKNHLLTYQEEISLLEKLKFSSDDSWIKEIYSLSLKKYDSPKFTFNYKYLELYDSLNHQNSNNNTFGANNNNNNNNNNNNNNNNNNNNNSNNDISTEDLISVKTLSSSSSSPSKKQENNNLITINEIRKKLIECNDIQTWISEYYFYRHQFQESYSITKRILKQDKYYSNQICLMVNISSMFELQLTNELYFTCHQLVDSFTSSLNNGSHGGSHGGGGGGSHGGSSGNGGAISWYGVACYYHLIQNSDQTQRFFTKSTTLDSRMGASWLGFGHFFASKGEHDQAMAAYRTSSRLLTGCHLPLLCIGMELIRVHNLNLASQYILQAKDICPYDPMIFNELGIIEYKNSQYNEAIKLFETALEICKIKSKASSSSSSSSNYHNLNLSNISFSGVGSSGIGNNNNNNNNRRTTTTTTTTSNNQKKNSSNNKTMIAYLESWEPTIYNLAHCYRKLRKFELALHYYTMSLSLLPNNPSTYSALGFTHHLQGNFDEAIDYYHQSLSIRDDTFTNVLLHKALSLSILQYD</sequence>
<protein>
    <recommendedName>
        <fullName>Anaphase-promoting complex subunit 6</fullName>
        <shortName>APC6</shortName>
    </recommendedName>
    <alternativeName>
        <fullName>Cell division cycle protein 16 homolog</fullName>
    </alternativeName>
</protein>
<reference key="1">
    <citation type="journal article" date="2005" name="Nature">
        <title>The genome of the social amoeba Dictyostelium discoideum.</title>
        <authorList>
            <person name="Eichinger L."/>
            <person name="Pachebat J.A."/>
            <person name="Gloeckner G."/>
            <person name="Rajandream M.A."/>
            <person name="Sucgang R."/>
            <person name="Berriman M."/>
            <person name="Song J."/>
            <person name="Olsen R."/>
            <person name="Szafranski K."/>
            <person name="Xu Q."/>
            <person name="Tunggal B."/>
            <person name="Kummerfeld S."/>
            <person name="Madera M."/>
            <person name="Konfortov B.A."/>
            <person name="Rivero F."/>
            <person name="Bankier A.T."/>
            <person name="Lehmann R."/>
            <person name="Hamlin N."/>
            <person name="Davies R."/>
            <person name="Gaudet P."/>
            <person name="Fey P."/>
            <person name="Pilcher K."/>
            <person name="Chen G."/>
            <person name="Saunders D."/>
            <person name="Sodergren E.J."/>
            <person name="Davis P."/>
            <person name="Kerhornou A."/>
            <person name="Nie X."/>
            <person name="Hall N."/>
            <person name="Anjard C."/>
            <person name="Hemphill L."/>
            <person name="Bason N."/>
            <person name="Farbrother P."/>
            <person name="Desany B."/>
            <person name="Just E."/>
            <person name="Morio T."/>
            <person name="Rost R."/>
            <person name="Churcher C.M."/>
            <person name="Cooper J."/>
            <person name="Haydock S."/>
            <person name="van Driessche N."/>
            <person name="Cronin A."/>
            <person name="Goodhead I."/>
            <person name="Muzny D.M."/>
            <person name="Mourier T."/>
            <person name="Pain A."/>
            <person name="Lu M."/>
            <person name="Harper D."/>
            <person name="Lindsay R."/>
            <person name="Hauser H."/>
            <person name="James K.D."/>
            <person name="Quiles M."/>
            <person name="Madan Babu M."/>
            <person name="Saito T."/>
            <person name="Buchrieser C."/>
            <person name="Wardroper A."/>
            <person name="Felder M."/>
            <person name="Thangavelu M."/>
            <person name="Johnson D."/>
            <person name="Knights A."/>
            <person name="Loulseged H."/>
            <person name="Mungall K.L."/>
            <person name="Oliver K."/>
            <person name="Price C."/>
            <person name="Quail M.A."/>
            <person name="Urushihara H."/>
            <person name="Hernandez J."/>
            <person name="Rabbinowitsch E."/>
            <person name="Steffen D."/>
            <person name="Sanders M."/>
            <person name="Ma J."/>
            <person name="Kohara Y."/>
            <person name="Sharp S."/>
            <person name="Simmonds M.N."/>
            <person name="Spiegler S."/>
            <person name="Tivey A."/>
            <person name="Sugano S."/>
            <person name="White B."/>
            <person name="Walker D."/>
            <person name="Woodward J.R."/>
            <person name="Winckler T."/>
            <person name="Tanaka Y."/>
            <person name="Shaulsky G."/>
            <person name="Schleicher M."/>
            <person name="Weinstock G.M."/>
            <person name="Rosenthal A."/>
            <person name="Cox E.C."/>
            <person name="Chisholm R.L."/>
            <person name="Gibbs R.A."/>
            <person name="Loomis W.F."/>
            <person name="Platzer M."/>
            <person name="Kay R.R."/>
            <person name="Williams J.G."/>
            <person name="Dear P.H."/>
            <person name="Noegel A.A."/>
            <person name="Barrell B.G."/>
            <person name="Kuspa A."/>
        </authorList>
    </citation>
    <scope>NUCLEOTIDE SEQUENCE [LARGE SCALE GENOMIC DNA]</scope>
    <source>
        <strain>AX4</strain>
    </source>
</reference>
<gene>
    <name type="primary">anapc6</name>
    <name type="synonym">apc6</name>
    <name type="synonym">cdc16</name>
    <name type="ORF">DDB_G0286233</name>
</gene>